<geneLocation type="chloroplast"/>
<keyword id="KW-0150">Chloroplast</keyword>
<keyword id="KW-0934">Plastid</keyword>
<keyword id="KW-1185">Reference proteome</keyword>
<keyword id="KW-0687">Ribonucleoprotein</keyword>
<keyword id="KW-0689">Ribosomal protein</keyword>
<feature type="chain" id="PRO_0000352134" description="Small ribosomal subunit protein uS2c">
    <location>
        <begin position="1"/>
        <end position="236"/>
    </location>
</feature>
<proteinExistence type="inferred from homology"/>
<name>RR2_NICSY</name>
<dbReference type="EMBL" id="AB237912">
    <property type="protein sequence ID" value="BAE46636.1"/>
    <property type="molecule type" value="Genomic_DNA"/>
</dbReference>
<dbReference type="RefSeq" id="YP_358661.1">
    <property type="nucleotide sequence ID" value="NC_007500.1"/>
</dbReference>
<dbReference type="SMR" id="Q3C1H0"/>
<dbReference type="GeneID" id="3735195"/>
<dbReference type="KEGG" id="nsy:3735195"/>
<dbReference type="OrthoDB" id="32509at4085"/>
<dbReference type="Proteomes" id="UP000189701">
    <property type="component" value="Chloroplast Pltd"/>
</dbReference>
<dbReference type="GO" id="GO:0009507">
    <property type="term" value="C:chloroplast"/>
    <property type="evidence" value="ECO:0007669"/>
    <property type="project" value="UniProtKB-SubCell"/>
</dbReference>
<dbReference type="GO" id="GO:0005763">
    <property type="term" value="C:mitochondrial small ribosomal subunit"/>
    <property type="evidence" value="ECO:0007669"/>
    <property type="project" value="TreeGrafter"/>
</dbReference>
<dbReference type="GO" id="GO:0003735">
    <property type="term" value="F:structural constituent of ribosome"/>
    <property type="evidence" value="ECO:0007669"/>
    <property type="project" value="InterPro"/>
</dbReference>
<dbReference type="GO" id="GO:0006412">
    <property type="term" value="P:translation"/>
    <property type="evidence" value="ECO:0007669"/>
    <property type="project" value="UniProtKB-UniRule"/>
</dbReference>
<dbReference type="CDD" id="cd01425">
    <property type="entry name" value="RPS2"/>
    <property type="match status" value="1"/>
</dbReference>
<dbReference type="FunFam" id="3.40.50.10490:FF:000101">
    <property type="match status" value="1"/>
</dbReference>
<dbReference type="FunFam" id="1.10.287.610:FF:000001">
    <property type="entry name" value="30S ribosomal protein S2"/>
    <property type="match status" value="1"/>
</dbReference>
<dbReference type="FunFam" id="3.40.50.10490:FF:000008">
    <property type="entry name" value="30S ribosomal protein S2, chloroplastic"/>
    <property type="match status" value="1"/>
</dbReference>
<dbReference type="Gene3D" id="3.40.50.10490">
    <property type="entry name" value="Glucose-6-phosphate isomerase like protein, domain 1"/>
    <property type="match status" value="1"/>
</dbReference>
<dbReference type="Gene3D" id="1.10.287.610">
    <property type="entry name" value="Helix hairpin bin"/>
    <property type="match status" value="1"/>
</dbReference>
<dbReference type="HAMAP" id="MF_00291_B">
    <property type="entry name" value="Ribosomal_uS2_B"/>
    <property type="match status" value="1"/>
</dbReference>
<dbReference type="InterPro" id="IPR001865">
    <property type="entry name" value="Ribosomal_uS2"/>
</dbReference>
<dbReference type="InterPro" id="IPR005706">
    <property type="entry name" value="Ribosomal_uS2_bac/mit/plastid"/>
</dbReference>
<dbReference type="InterPro" id="IPR018130">
    <property type="entry name" value="Ribosomal_uS2_CS"/>
</dbReference>
<dbReference type="InterPro" id="IPR023591">
    <property type="entry name" value="Ribosomal_uS2_flav_dom_sf"/>
</dbReference>
<dbReference type="NCBIfam" id="TIGR01011">
    <property type="entry name" value="rpsB_bact"/>
    <property type="match status" value="1"/>
</dbReference>
<dbReference type="PANTHER" id="PTHR12534">
    <property type="entry name" value="30S RIBOSOMAL PROTEIN S2 PROKARYOTIC AND ORGANELLAR"/>
    <property type="match status" value="1"/>
</dbReference>
<dbReference type="PANTHER" id="PTHR12534:SF0">
    <property type="entry name" value="SMALL RIBOSOMAL SUBUNIT PROTEIN US2M"/>
    <property type="match status" value="1"/>
</dbReference>
<dbReference type="Pfam" id="PF00318">
    <property type="entry name" value="Ribosomal_S2"/>
    <property type="match status" value="1"/>
</dbReference>
<dbReference type="PRINTS" id="PR00395">
    <property type="entry name" value="RIBOSOMALS2"/>
</dbReference>
<dbReference type="SUPFAM" id="SSF52313">
    <property type="entry name" value="Ribosomal protein S2"/>
    <property type="match status" value="1"/>
</dbReference>
<dbReference type="PROSITE" id="PS00962">
    <property type="entry name" value="RIBOSOMAL_S2_1"/>
    <property type="match status" value="1"/>
</dbReference>
<dbReference type="PROSITE" id="PS00963">
    <property type="entry name" value="RIBOSOMAL_S2_2"/>
    <property type="match status" value="1"/>
</dbReference>
<comment type="subcellular location">
    <subcellularLocation>
        <location>Plastid</location>
        <location>Chloroplast</location>
    </subcellularLocation>
</comment>
<comment type="similarity">
    <text evidence="1">Belongs to the universal ribosomal protein uS2 family.</text>
</comment>
<reference key="1">
    <citation type="journal article" date="2006" name="Mol. Genet. Genomics">
        <title>The chloroplast genome of Nicotiana sylvestris and Nicotiana tomentosiformis: complete sequencing confirms that the Nicotiana sylvestris progenitor is the maternal genome donor of Nicotiana tabacum.</title>
        <authorList>
            <person name="Yukawa M."/>
            <person name="Tsudzuki T."/>
            <person name="Sugiura M."/>
        </authorList>
    </citation>
    <scope>NUCLEOTIDE SEQUENCE [LARGE SCALE GENOMIC DNA]</scope>
</reference>
<gene>
    <name type="primary">rps2</name>
</gene>
<protein>
    <recommendedName>
        <fullName evidence="1">Small ribosomal subunit protein uS2c</fullName>
    </recommendedName>
    <alternativeName>
        <fullName>30S ribosomal protein S2, chloroplastic</fullName>
    </alternativeName>
</protein>
<organism>
    <name type="scientific">Nicotiana sylvestris</name>
    <name type="common">Wood tobacco</name>
    <name type="synonym">South American tobacco</name>
    <dbReference type="NCBI Taxonomy" id="4096"/>
    <lineage>
        <taxon>Eukaryota</taxon>
        <taxon>Viridiplantae</taxon>
        <taxon>Streptophyta</taxon>
        <taxon>Embryophyta</taxon>
        <taxon>Tracheophyta</taxon>
        <taxon>Spermatophyta</taxon>
        <taxon>Magnoliopsida</taxon>
        <taxon>eudicotyledons</taxon>
        <taxon>Gunneridae</taxon>
        <taxon>Pentapetalae</taxon>
        <taxon>asterids</taxon>
        <taxon>lamiids</taxon>
        <taxon>Solanales</taxon>
        <taxon>Solanaceae</taxon>
        <taxon>Nicotianoideae</taxon>
        <taxon>Nicotianeae</taxon>
        <taxon>Nicotiana</taxon>
    </lineage>
</organism>
<evidence type="ECO:0000305" key="1"/>
<sequence>MTRRYWNINLEEMMEAGVHFGHGTRKWNPKMAPYISAKRKGIHITNLTRTARFLSEACDLVFDAASRGKQFLIVGTKNKAADSVEWAAIRARCHYVNKKWLGGMLTNWSTTETRLHKFRDLRMEQKTGRLNRLPKRDAAMLKRQLSRLQTYLGGIKYMTGVPDIVIIVDQHEEYTALRECITLGIPTICLTDTNCDPDLADISIPANDDAISSIRLILNKLVFAICEGRSSYIRNP</sequence>
<accession>Q3C1H0</accession>